<keyword id="KW-0687">Ribonucleoprotein</keyword>
<keyword id="KW-0689">Ribosomal protein</keyword>
<keyword id="KW-0694">RNA-binding</keyword>
<keyword id="KW-0699">rRNA-binding</keyword>
<comment type="function">
    <text evidence="1">Forms part of the ribosomal stalk, playing a central role in the interaction of the ribosome with GTP-bound translation factors.</text>
</comment>
<comment type="subunit">
    <text evidence="1">Part of the ribosomal stalk of the 50S ribosomal subunit. The N-terminus interacts with L11 and the large rRNA to form the base of the stalk. The C-terminus forms an elongated spine to which L12 dimers bind in a sequential fashion forming a multimeric L10(L12)X complex.</text>
</comment>
<comment type="similarity">
    <text evidence="1">Belongs to the universal ribosomal protein uL10 family.</text>
</comment>
<proteinExistence type="inferred from homology"/>
<protein>
    <recommendedName>
        <fullName evidence="1">Large ribosomal subunit protein uL10</fullName>
    </recommendedName>
    <alternativeName>
        <fullName evidence="2">50S ribosomal protein L10</fullName>
    </alternativeName>
</protein>
<name>RL10_ACIBT</name>
<dbReference type="EMBL" id="CP000521">
    <property type="protein sequence ID" value="ABO10755.2"/>
    <property type="molecule type" value="Genomic_DNA"/>
</dbReference>
<dbReference type="RefSeq" id="WP_001196213.1">
    <property type="nucleotide sequence ID" value="NZ_CP053098.1"/>
</dbReference>
<dbReference type="SMR" id="A3M1G1"/>
<dbReference type="GeneID" id="92892282"/>
<dbReference type="KEGG" id="acb:A1S_0285"/>
<dbReference type="HOGENOM" id="CLU_092227_0_2_6"/>
<dbReference type="GO" id="GO:0015934">
    <property type="term" value="C:large ribosomal subunit"/>
    <property type="evidence" value="ECO:0007669"/>
    <property type="project" value="InterPro"/>
</dbReference>
<dbReference type="GO" id="GO:0070180">
    <property type="term" value="F:large ribosomal subunit rRNA binding"/>
    <property type="evidence" value="ECO:0007669"/>
    <property type="project" value="UniProtKB-UniRule"/>
</dbReference>
<dbReference type="GO" id="GO:0003735">
    <property type="term" value="F:structural constituent of ribosome"/>
    <property type="evidence" value="ECO:0007669"/>
    <property type="project" value="InterPro"/>
</dbReference>
<dbReference type="GO" id="GO:0006412">
    <property type="term" value="P:translation"/>
    <property type="evidence" value="ECO:0007669"/>
    <property type="project" value="UniProtKB-UniRule"/>
</dbReference>
<dbReference type="CDD" id="cd05797">
    <property type="entry name" value="Ribosomal_L10"/>
    <property type="match status" value="1"/>
</dbReference>
<dbReference type="Gene3D" id="3.30.70.1730">
    <property type="match status" value="1"/>
</dbReference>
<dbReference type="HAMAP" id="MF_00362">
    <property type="entry name" value="Ribosomal_uL10"/>
    <property type="match status" value="1"/>
</dbReference>
<dbReference type="InterPro" id="IPR001790">
    <property type="entry name" value="Ribosomal_uL10"/>
</dbReference>
<dbReference type="InterPro" id="IPR043141">
    <property type="entry name" value="Ribosomal_uL10-like_sf"/>
</dbReference>
<dbReference type="InterPro" id="IPR022973">
    <property type="entry name" value="Ribosomal_uL10_bac"/>
</dbReference>
<dbReference type="InterPro" id="IPR047865">
    <property type="entry name" value="Ribosomal_uL10_bac_type"/>
</dbReference>
<dbReference type="InterPro" id="IPR002363">
    <property type="entry name" value="Ribosomal_uL10_CS_bac"/>
</dbReference>
<dbReference type="NCBIfam" id="NF000955">
    <property type="entry name" value="PRK00099.1-1"/>
    <property type="match status" value="1"/>
</dbReference>
<dbReference type="PANTHER" id="PTHR11560">
    <property type="entry name" value="39S RIBOSOMAL PROTEIN L10, MITOCHONDRIAL"/>
    <property type="match status" value="1"/>
</dbReference>
<dbReference type="Pfam" id="PF00466">
    <property type="entry name" value="Ribosomal_L10"/>
    <property type="match status" value="1"/>
</dbReference>
<dbReference type="SUPFAM" id="SSF160369">
    <property type="entry name" value="Ribosomal protein L10-like"/>
    <property type="match status" value="1"/>
</dbReference>
<dbReference type="PROSITE" id="PS01109">
    <property type="entry name" value="RIBOSOMAL_L10"/>
    <property type="match status" value="1"/>
</dbReference>
<accession>A3M1G1</accession>
<reference key="1">
    <citation type="journal article" date="2007" name="Genes Dev.">
        <title>New insights into Acinetobacter baumannii pathogenesis revealed by high-density pyrosequencing and transposon mutagenesis.</title>
        <authorList>
            <person name="Smith M.G."/>
            <person name="Gianoulis T.A."/>
            <person name="Pukatzki S."/>
            <person name="Mekalanos J.J."/>
            <person name="Ornston L.N."/>
            <person name="Gerstein M."/>
            <person name="Snyder M."/>
        </authorList>
    </citation>
    <scope>NUCLEOTIDE SEQUENCE [LARGE SCALE GENOMIC DNA]</scope>
    <source>
        <strain>ATCC 17978 / DSM 105126 / CIP 53.77 / LMG 1025 / NCDC KC755 / 5377</strain>
    </source>
</reference>
<feature type="chain" id="PRO_1000120903" description="Large ribosomal subunit protein uL10">
    <location>
        <begin position="1"/>
        <end position="168"/>
    </location>
</feature>
<gene>
    <name evidence="1" type="primary">rplJ</name>
    <name type="ordered locus">A1S_0285</name>
</gene>
<sequence length="168" mass="18090">MALLIEDKKQIVAEVSEVASKAFAAVVADYQGLSVEQLTTLRVEARKLGVTTRIVRNTLAKRAFQGTQFDILNDNLVGPTILGFSTSEDDMGAAARLFEEFAKTNKAFELKAAAFDGKVYQGADVSVIANLPNQEKALTMLASVLQAPISKLGRLITALKEKNESEAA</sequence>
<evidence type="ECO:0000255" key="1">
    <source>
        <dbReference type="HAMAP-Rule" id="MF_00362"/>
    </source>
</evidence>
<evidence type="ECO:0000305" key="2"/>
<organism>
    <name type="scientific">Acinetobacter baumannii (strain ATCC 17978 / DSM 105126 / CIP 53.77 / LMG 1025 / NCDC KC755 / 5377)</name>
    <dbReference type="NCBI Taxonomy" id="400667"/>
    <lineage>
        <taxon>Bacteria</taxon>
        <taxon>Pseudomonadati</taxon>
        <taxon>Pseudomonadota</taxon>
        <taxon>Gammaproteobacteria</taxon>
        <taxon>Moraxellales</taxon>
        <taxon>Moraxellaceae</taxon>
        <taxon>Acinetobacter</taxon>
        <taxon>Acinetobacter calcoaceticus/baumannii complex</taxon>
    </lineage>
</organism>